<dbReference type="EC" id="2.3.1.234" evidence="1"/>
<dbReference type="EMBL" id="AE005174">
    <property type="protein sequence ID" value="AAG58198.1"/>
    <property type="molecule type" value="Genomic_DNA"/>
</dbReference>
<dbReference type="EMBL" id="BA000007">
    <property type="protein sequence ID" value="BAB37370.1"/>
    <property type="molecule type" value="Genomic_DNA"/>
</dbReference>
<dbReference type="PIR" id="B85967">
    <property type="entry name" value="B85967"/>
</dbReference>
<dbReference type="PIR" id="C91122">
    <property type="entry name" value="C91122"/>
</dbReference>
<dbReference type="RefSeq" id="NP_311974.1">
    <property type="nucleotide sequence ID" value="NC_002695.1"/>
</dbReference>
<dbReference type="RefSeq" id="WP_001264362.1">
    <property type="nucleotide sequence ID" value="NZ_SDVX01000004.1"/>
</dbReference>
<dbReference type="SMR" id="Q8XBK3"/>
<dbReference type="STRING" id="155864.Z4417"/>
<dbReference type="GeneID" id="916225"/>
<dbReference type="KEGG" id="ece:Z4417"/>
<dbReference type="KEGG" id="ecs:ECs_3947"/>
<dbReference type="PATRIC" id="fig|386585.9.peg.4117"/>
<dbReference type="eggNOG" id="COG0533">
    <property type="taxonomic scope" value="Bacteria"/>
</dbReference>
<dbReference type="HOGENOM" id="CLU_023208_0_0_6"/>
<dbReference type="Proteomes" id="UP000000558">
    <property type="component" value="Chromosome"/>
</dbReference>
<dbReference type="Proteomes" id="UP000002519">
    <property type="component" value="Chromosome"/>
</dbReference>
<dbReference type="GO" id="GO:0005737">
    <property type="term" value="C:cytoplasm"/>
    <property type="evidence" value="ECO:0007669"/>
    <property type="project" value="UniProtKB-SubCell"/>
</dbReference>
<dbReference type="GO" id="GO:0005506">
    <property type="term" value="F:iron ion binding"/>
    <property type="evidence" value="ECO:0007669"/>
    <property type="project" value="UniProtKB-UniRule"/>
</dbReference>
<dbReference type="GO" id="GO:0061711">
    <property type="term" value="F:N(6)-L-threonylcarbamoyladenine synthase activity"/>
    <property type="evidence" value="ECO:0007669"/>
    <property type="project" value="UniProtKB-EC"/>
</dbReference>
<dbReference type="GO" id="GO:0002949">
    <property type="term" value="P:tRNA threonylcarbamoyladenosine modification"/>
    <property type="evidence" value="ECO:0007669"/>
    <property type="project" value="UniProtKB-UniRule"/>
</dbReference>
<dbReference type="CDD" id="cd24097">
    <property type="entry name" value="ASKHA_NBD_TsaD-like"/>
    <property type="match status" value="1"/>
</dbReference>
<dbReference type="FunFam" id="3.30.420.40:FF:000031">
    <property type="entry name" value="tRNA N6-adenosine threonylcarbamoyltransferase"/>
    <property type="match status" value="1"/>
</dbReference>
<dbReference type="Gene3D" id="3.30.420.40">
    <property type="match status" value="2"/>
</dbReference>
<dbReference type="HAMAP" id="MF_01445">
    <property type="entry name" value="TsaD"/>
    <property type="match status" value="1"/>
</dbReference>
<dbReference type="InterPro" id="IPR043129">
    <property type="entry name" value="ATPase_NBD"/>
</dbReference>
<dbReference type="InterPro" id="IPR000905">
    <property type="entry name" value="Gcp-like_dom"/>
</dbReference>
<dbReference type="InterPro" id="IPR017861">
    <property type="entry name" value="KAE1/TsaD"/>
</dbReference>
<dbReference type="InterPro" id="IPR017860">
    <property type="entry name" value="Peptidase_M22_CS"/>
</dbReference>
<dbReference type="InterPro" id="IPR022450">
    <property type="entry name" value="TsaD"/>
</dbReference>
<dbReference type="NCBIfam" id="TIGR00329">
    <property type="entry name" value="gcp_kae1"/>
    <property type="match status" value="1"/>
</dbReference>
<dbReference type="NCBIfam" id="TIGR03723">
    <property type="entry name" value="T6A_TsaD_YgjD"/>
    <property type="match status" value="1"/>
</dbReference>
<dbReference type="PANTHER" id="PTHR11735">
    <property type="entry name" value="TRNA N6-ADENOSINE THREONYLCARBAMOYLTRANSFERASE"/>
    <property type="match status" value="1"/>
</dbReference>
<dbReference type="PANTHER" id="PTHR11735:SF6">
    <property type="entry name" value="TRNA N6-ADENOSINE THREONYLCARBAMOYLTRANSFERASE, MITOCHONDRIAL"/>
    <property type="match status" value="1"/>
</dbReference>
<dbReference type="Pfam" id="PF00814">
    <property type="entry name" value="TsaD"/>
    <property type="match status" value="1"/>
</dbReference>
<dbReference type="PRINTS" id="PR00789">
    <property type="entry name" value="OSIALOPTASE"/>
</dbReference>
<dbReference type="SUPFAM" id="SSF53067">
    <property type="entry name" value="Actin-like ATPase domain"/>
    <property type="match status" value="1"/>
</dbReference>
<dbReference type="PROSITE" id="PS01016">
    <property type="entry name" value="GLYCOPROTEASE"/>
    <property type="match status" value="1"/>
</dbReference>
<gene>
    <name evidence="1" type="primary">tsaD</name>
    <name type="synonym">gcp</name>
    <name type="ordered locus">Z4417</name>
    <name type="ordered locus">ECs3947</name>
</gene>
<proteinExistence type="inferred from homology"/>
<comment type="function">
    <text evidence="1">Required for the formation of a threonylcarbamoyl group on adenosine at position 37 (t(6)A37) in tRNAs that read codons beginning with adenine. Is involved in the transfer of the threonylcarbamoyl moiety of threonylcarbamoyl-AMP (TC-AMP) to the N6 group of A37, together with TsaE and TsaB. TsaD likely plays a direct catalytic role in this reaction.</text>
</comment>
<comment type="catalytic activity">
    <reaction evidence="1">
        <text>L-threonylcarbamoyladenylate + adenosine(37) in tRNA = N(6)-L-threonylcarbamoyladenosine(37) in tRNA + AMP + H(+)</text>
        <dbReference type="Rhea" id="RHEA:37059"/>
        <dbReference type="Rhea" id="RHEA-COMP:10162"/>
        <dbReference type="Rhea" id="RHEA-COMP:10163"/>
        <dbReference type="ChEBI" id="CHEBI:15378"/>
        <dbReference type="ChEBI" id="CHEBI:73682"/>
        <dbReference type="ChEBI" id="CHEBI:74411"/>
        <dbReference type="ChEBI" id="CHEBI:74418"/>
        <dbReference type="ChEBI" id="CHEBI:456215"/>
        <dbReference type="EC" id="2.3.1.234"/>
    </reaction>
</comment>
<comment type="cofactor">
    <cofactor evidence="1">
        <name>Fe(2+)</name>
        <dbReference type="ChEBI" id="CHEBI:29033"/>
    </cofactor>
    <text evidence="1">Binds 1 Fe(2+) ion per subunit.</text>
</comment>
<comment type="subcellular location">
    <subcellularLocation>
        <location evidence="1">Cytoplasm</location>
    </subcellularLocation>
</comment>
<comment type="similarity">
    <text evidence="1">Belongs to the KAE1 / TsaD family.</text>
</comment>
<feature type="chain" id="PRO_1000024433" description="tRNA N6-adenosine threonylcarbamoyltransferase">
    <location>
        <begin position="1"/>
        <end position="337"/>
    </location>
</feature>
<feature type="binding site" evidence="1">
    <location>
        <position position="111"/>
    </location>
    <ligand>
        <name>Fe cation</name>
        <dbReference type="ChEBI" id="CHEBI:24875"/>
    </ligand>
</feature>
<feature type="binding site" evidence="1">
    <location>
        <position position="115"/>
    </location>
    <ligand>
        <name>Fe cation</name>
        <dbReference type="ChEBI" id="CHEBI:24875"/>
    </ligand>
</feature>
<feature type="binding site" evidence="1">
    <location>
        <begin position="134"/>
        <end position="138"/>
    </location>
    <ligand>
        <name>substrate</name>
    </ligand>
</feature>
<feature type="binding site" evidence="1">
    <location>
        <position position="167"/>
    </location>
    <ligand>
        <name>substrate</name>
    </ligand>
</feature>
<feature type="binding site" evidence="1">
    <location>
        <position position="180"/>
    </location>
    <ligand>
        <name>substrate</name>
    </ligand>
</feature>
<feature type="binding site" evidence="1">
    <location>
        <position position="272"/>
    </location>
    <ligand>
        <name>substrate</name>
    </ligand>
</feature>
<feature type="binding site" evidence="1">
    <location>
        <position position="300"/>
    </location>
    <ligand>
        <name>Fe cation</name>
        <dbReference type="ChEBI" id="CHEBI:24875"/>
    </ligand>
</feature>
<accession>Q8XBK3</accession>
<accession>Q7AAP9</accession>
<reference key="1">
    <citation type="journal article" date="2001" name="Nature">
        <title>Genome sequence of enterohaemorrhagic Escherichia coli O157:H7.</title>
        <authorList>
            <person name="Perna N.T."/>
            <person name="Plunkett G. III"/>
            <person name="Burland V."/>
            <person name="Mau B."/>
            <person name="Glasner J.D."/>
            <person name="Rose D.J."/>
            <person name="Mayhew G.F."/>
            <person name="Evans P.S."/>
            <person name="Gregor J."/>
            <person name="Kirkpatrick H.A."/>
            <person name="Posfai G."/>
            <person name="Hackett J."/>
            <person name="Klink S."/>
            <person name="Boutin A."/>
            <person name="Shao Y."/>
            <person name="Miller L."/>
            <person name="Grotbeck E.J."/>
            <person name="Davis N.W."/>
            <person name="Lim A."/>
            <person name="Dimalanta E.T."/>
            <person name="Potamousis K."/>
            <person name="Apodaca J."/>
            <person name="Anantharaman T.S."/>
            <person name="Lin J."/>
            <person name="Yen G."/>
            <person name="Schwartz D.C."/>
            <person name="Welch R.A."/>
            <person name="Blattner F.R."/>
        </authorList>
    </citation>
    <scope>NUCLEOTIDE SEQUENCE [LARGE SCALE GENOMIC DNA]</scope>
    <source>
        <strain>O157:H7 / EDL933 / ATCC 700927 / EHEC</strain>
    </source>
</reference>
<reference key="2">
    <citation type="journal article" date="2001" name="DNA Res.">
        <title>Complete genome sequence of enterohemorrhagic Escherichia coli O157:H7 and genomic comparison with a laboratory strain K-12.</title>
        <authorList>
            <person name="Hayashi T."/>
            <person name="Makino K."/>
            <person name="Ohnishi M."/>
            <person name="Kurokawa K."/>
            <person name="Ishii K."/>
            <person name="Yokoyama K."/>
            <person name="Han C.-G."/>
            <person name="Ohtsubo E."/>
            <person name="Nakayama K."/>
            <person name="Murata T."/>
            <person name="Tanaka M."/>
            <person name="Tobe T."/>
            <person name="Iida T."/>
            <person name="Takami H."/>
            <person name="Honda T."/>
            <person name="Sasakawa C."/>
            <person name="Ogasawara N."/>
            <person name="Yasunaga T."/>
            <person name="Kuhara S."/>
            <person name="Shiba T."/>
            <person name="Hattori M."/>
            <person name="Shinagawa H."/>
        </authorList>
    </citation>
    <scope>NUCLEOTIDE SEQUENCE [LARGE SCALE GENOMIC DNA]</scope>
    <source>
        <strain>O157:H7 / Sakai / RIMD 0509952 / EHEC</strain>
    </source>
</reference>
<keyword id="KW-0012">Acyltransferase</keyword>
<keyword id="KW-0963">Cytoplasm</keyword>
<keyword id="KW-0408">Iron</keyword>
<keyword id="KW-0479">Metal-binding</keyword>
<keyword id="KW-1185">Reference proteome</keyword>
<keyword id="KW-0808">Transferase</keyword>
<keyword id="KW-0819">tRNA processing</keyword>
<evidence type="ECO:0000255" key="1">
    <source>
        <dbReference type="HAMAP-Rule" id="MF_01445"/>
    </source>
</evidence>
<organism>
    <name type="scientific">Escherichia coli O157:H7</name>
    <dbReference type="NCBI Taxonomy" id="83334"/>
    <lineage>
        <taxon>Bacteria</taxon>
        <taxon>Pseudomonadati</taxon>
        <taxon>Pseudomonadota</taxon>
        <taxon>Gammaproteobacteria</taxon>
        <taxon>Enterobacterales</taxon>
        <taxon>Enterobacteriaceae</taxon>
        <taxon>Escherichia</taxon>
    </lineage>
</organism>
<name>TSAD_ECO57</name>
<protein>
    <recommendedName>
        <fullName evidence="1">tRNA N6-adenosine threonylcarbamoyltransferase</fullName>
        <ecNumber evidence="1">2.3.1.234</ecNumber>
    </recommendedName>
    <alternativeName>
        <fullName evidence="1">N6-L-threonylcarbamoyladenine synthase</fullName>
        <shortName evidence="1">t(6)A synthase</shortName>
    </alternativeName>
    <alternativeName>
        <fullName evidence="1">t(6)A37 threonylcarbamoyladenosine biosynthesis protein TsaD</fullName>
    </alternativeName>
    <alternativeName>
        <fullName evidence="1">tRNA threonylcarbamoyladenosine biosynthesis protein TsaD</fullName>
    </alternativeName>
</protein>
<sequence>MRVLGIETSCDETGIAIYDDEKGLLANQLYSQVKLHADYGGVVPELASRDHVRKTVPLIQAALKESGLTAKDIDAVAYTAGPGLVGALLVGATVGRSLAFAWNVPAIPVHHMEGHLLAPMLEDNPPEFPFVALLVSGGHTQLISVTGIGQYELLGESIDDAAGEAFDKTAKLLGLDYPGGPLLSKMAAQGTAGRFVFPRPMTDRPGLDFSFSGLKTFAANTIRDNGTDDQTRADIARAFEDAVVDTLMIKCKRALDLTGFKRLVMAGGVSANRTLRAKLAEMMKKRRGEVFYARPEFCTDNGAMIAYAGMVRFKAGATADLGVSVRPRWPLAELPAA</sequence>